<reference key="1">
    <citation type="submission" date="1999-08" db="EMBL/GenBank/DDBJ databases">
        <authorList>
            <person name="Vage D.I."/>
        </authorList>
    </citation>
    <scope>NUCLEOTIDE SEQUENCE [MRNA]</scope>
    <scope>SEQUENCE REVISION TO 14</scope>
</reference>
<reference key="2">
    <citation type="journal article" date="1997" name="Nat. Genet.">
        <title>A non-epistatic interaction of agouti and extension in the fox, Vulpes vulpes.</title>
        <authorList>
            <person name="Vage D.I."/>
            <person name="Lu D."/>
            <person name="Klungland J."/>
            <person name="Lien S."/>
            <person name="Adalsteinsson S."/>
            <person name="Cone R.D."/>
        </authorList>
    </citation>
    <scope>NUCLEOTIDE SEQUENCE [MRNA] OF 1-125</scope>
    <source>
        <tissue>Skin</tissue>
    </source>
</reference>
<dbReference type="EMBL" id="Y09877">
    <property type="protein sequence ID" value="CAA71004.2"/>
    <property type="molecule type" value="mRNA"/>
</dbReference>
<dbReference type="STRING" id="9627.ENSVVUP00000005760"/>
<dbReference type="GlyCosmos" id="P79407">
    <property type="glycosylation" value="1 site, No reported glycans"/>
</dbReference>
<dbReference type="Proteomes" id="UP000286640">
    <property type="component" value="Unplaced"/>
</dbReference>
<dbReference type="GO" id="GO:0005615">
    <property type="term" value="C:extracellular space"/>
    <property type="evidence" value="ECO:0000250"/>
    <property type="project" value="UniProtKB"/>
</dbReference>
<dbReference type="GO" id="GO:0031779">
    <property type="term" value="F:melanocortin receptor binding"/>
    <property type="evidence" value="ECO:0007669"/>
    <property type="project" value="TreeGrafter"/>
</dbReference>
<dbReference type="GO" id="GO:0005184">
    <property type="term" value="F:neuropeptide hormone activity"/>
    <property type="evidence" value="ECO:0007669"/>
    <property type="project" value="TreeGrafter"/>
</dbReference>
<dbReference type="GO" id="GO:0009755">
    <property type="term" value="P:hormone-mediated signaling pathway"/>
    <property type="evidence" value="ECO:0007669"/>
    <property type="project" value="InterPro"/>
</dbReference>
<dbReference type="GO" id="GO:0042438">
    <property type="term" value="P:melanin biosynthetic process"/>
    <property type="evidence" value="ECO:0000250"/>
    <property type="project" value="UniProtKB"/>
</dbReference>
<dbReference type="GO" id="GO:0032438">
    <property type="term" value="P:melanosome organization"/>
    <property type="evidence" value="ECO:0007669"/>
    <property type="project" value="TreeGrafter"/>
</dbReference>
<dbReference type="Gene3D" id="4.10.760.10">
    <property type="entry name" value="Agouti domain"/>
    <property type="match status" value="1"/>
</dbReference>
<dbReference type="InterPro" id="IPR007733">
    <property type="entry name" value="Agouti"/>
</dbReference>
<dbReference type="InterPro" id="IPR027300">
    <property type="entry name" value="Agouti_dom"/>
</dbReference>
<dbReference type="InterPro" id="IPR036836">
    <property type="entry name" value="Agouti_dom_sf"/>
</dbReference>
<dbReference type="PANTHER" id="PTHR16551">
    <property type="entry name" value="AGOUTI RELATED"/>
    <property type="match status" value="1"/>
</dbReference>
<dbReference type="PANTHER" id="PTHR16551:SF1">
    <property type="entry name" value="AGOUTI-SIGNALING PROTEIN"/>
    <property type="match status" value="1"/>
</dbReference>
<dbReference type="Pfam" id="PF05039">
    <property type="entry name" value="Agouti"/>
    <property type="match status" value="1"/>
</dbReference>
<dbReference type="SMART" id="SM00792">
    <property type="entry name" value="Agouti"/>
    <property type="match status" value="1"/>
</dbReference>
<dbReference type="SUPFAM" id="SSF57055">
    <property type="entry name" value="Agouti-related protein"/>
    <property type="match status" value="1"/>
</dbReference>
<dbReference type="PROSITE" id="PS60024">
    <property type="entry name" value="AGOUTI_1"/>
    <property type="match status" value="1"/>
</dbReference>
<dbReference type="PROSITE" id="PS51150">
    <property type="entry name" value="AGOUTI_2"/>
    <property type="match status" value="1"/>
</dbReference>
<name>ASIP_VULVU</name>
<comment type="function">
    <text evidence="3">Involved in the regulation of melanogenesis. The binding of ASP to MC1R precludes alpha-MSH initiated signaling and thus blocks production of cAMP, leading to a down-regulation of eumelanogenesis (brown/black pigment) and thus increasing synthesis of pheomelanin (yellow/red pigment) (By similarity).</text>
</comment>
<comment type="subcellular location">
    <subcellularLocation>
        <location evidence="2">Secreted</location>
    </subcellularLocation>
</comment>
<comment type="domain">
    <text evidence="1">The presence of a 'disulfide through disulfide knot' structurally defines this protein as a knottin.</text>
</comment>
<feature type="signal peptide" evidence="4">
    <location>
        <begin position="1"/>
        <end position="20"/>
    </location>
</feature>
<feature type="chain" id="PRO_0000001032" description="Agouti-signaling protein">
    <location>
        <begin position="21"/>
        <end position="131"/>
    </location>
</feature>
<feature type="domain" description="Agouti" evidence="5">
    <location>
        <begin position="92"/>
        <end position="131"/>
    </location>
</feature>
<feature type="region of interest" description="Disordered" evidence="6">
    <location>
        <begin position="57"/>
        <end position="104"/>
    </location>
</feature>
<feature type="glycosylation site" description="N-linked (GlcNAc...) asparagine" evidence="4">
    <location>
        <position position="38"/>
    </location>
</feature>
<feature type="disulfide bond" evidence="5">
    <location>
        <begin position="92"/>
        <end position="107"/>
    </location>
</feature>
<feature type="disulfide bond" evidence="5">
    <location>
        <begin position="99"/>
        <end position="113"/>
    </location>
</feature>
<feature type="disulfide bond" evidence="5">
    <location>
        <begin position="106"/>
        <end position="124"/>
    </location>
</feature>
<feature type="disulfide bond" evidence="5">
    <location>
        <begin position="110"/>
        <end position="131"/>
    </location>
</feature>
<feature type="disulfide bond" evidence="5">
    <location>
        <begin position="115"/>
        <end position="122"/>
    </location>
</feature>
<accession>P79407</accession>
<organism>
    <name type="scientific">Vulpes vulpes</name>
    <name type="common">Red fox</name>
    <dbReference type="NCBI Taxonomy" id="9627"/>
    <lineage>
        <taxon>Eukaryota</taxon>
        <taxon>Metazoa</taxon>
        <taxon>Chordata</taxon>
        <taxon>Craniata</taxon>
        <taxon>Vertebrata</taxon>
        <taxon>Euteleostomi</taxon>
        <taxon>Mammalia</taxon>
        <taxon>Eutheria</taxon>
        <taxon>Laurasiatheria</taxon>
        <taxon>Carnivora</taxon>
        <taxon>Caniformia</taxon>
        <taxon>Canidae</taxon>
        <taxon>Vulpes</taxon>
    </lineage>
</organism>
<keyword id="KW-1015">Disulfide bond</keyword>
<keyword id="KW-0325">Glycoprotein</keyword>
<keyword id="KW-0960">Knottin</keyword>
<keyword id="KW-1185">Reference proteome</keyword>
<keyword id="KW-0964">Secreted</keyword>
<keyword id="KW-0732">Signal</keyword>
<proteinExistence type="evidence at transcript level"/>
<sequence length="131" mass="14449">MNIFRLLLATLLVSLCFLTAYSHLAEEKPKDDRSLRSNSSVNLLDFPSVSIVALNKKSKKISRKEAEKKRSSKKKASMKNVARPRPPPPNPCVATRNSCKSPAPACCDPCASCQCRFFRSACTCRVLSPSC</sequence>
<gene>
    <name type="primary">ASIP</name>
</gene>
<evidence type="ECO:0000250" key="1"/>
<evidence type="ECO:0000250" key="2">
    <source>
        <dbReference type="UniProtKB" id="P42127"/>
    </source>
</evidence>
<evidence type="ECO:0000250" key="3">
    <source>
        <dbReference type="UniProtKB" id="Q03288"/>
    </source>
</evidence>
<evidence type="ECO:0000255" key="4"/>
<evidence type="ECO:0000255" key="5">
    <source>
        <dbReference type="PROSITE-ProRule" id="PRU00494"/>
    </source>
</evidence>
<evidence type="ECO:0000256" key="6">
    <source>
        <dbReference type="SAM" id="MobiDB-lite"/>
    </source>
</evidence>
<protein>
    <recommendedName>
        <fullName>Agouti-signaling protein</fullName>
        <shortName>ASP</shortName>
    </recommendedName>
    <alternativeName>
        <fullName>Agouti switch protein</fullName>
    </alternativeName>
</protein>